<dbReference type="EMBL" id="M33957">
    <property type="protein sequence ID" value="AAA35204.1"/>
    <property type="molecule type" value="Genomic_DNA"/>
</dbReference>
<dbReference type="EMBL" id="Z49210">
    <property type="protein sequence ID" value="CAA89103.1"/>
    <property type="molecule type" value="Genomic_DNA"/>
</dbReference>
<dbReference type="EMBL" id="BK006946">
    <property type="protein sequence ID" value="DAA09783.1"/>
    <property type="molecule type" value="Genomic_DNA"/>
</dbReference>
<dbReference type="PIR" id="S53957">
    <property type="entry name" value="S53957"/>
</dbReference>
<dbReference type="RefSeq" id="NP_013592.1">
    <property type="nucleotide sequence ID" value="NM_001182477.1"/>
</dbReference>
<dbReference type="SMR" id="P23642"/>
<dbReference type="BioGRID" id="35089">
    <property type="interactions" value="319"/>
</dbReference>
<dbReference type="ComplexPortal" id="CPX-1672">
    <property type="entry name" value="alpha-1,6-mannosyltransferase complex, M-Pol I variant"/>
</dbReference>
<dbReference type="DIP" id="DIP-886N"/>
<dbReference type="FunCoup" id="P23642">
    <property type="interactions" value="96"/>
</dbReference>
<dbReference type="IntAct" id="P23642">
    <property type="interactions" value="39"/>
</dbReference>
<dbReference type="STRING" id="4932.YML115C"/>
<dbReference type="CAZy" id="GT62">
    <property type="family name" value="Glycosyltransferase Family 62"/>
</dbReference>
<dbReference type="GlyCosmos" id="P23642">
    <property type="glycosylation" value="2 sites, No reported glycans"/>
</dbReference>
<dbReference type="GlyGen" id="P23642">
    <property type="glycosylation" value="2 sites"/>
</dbReference>
<dbReference type="iPTMnet" id="P23642"/>
<dbReference type="PaxDb" id="4932-YML115C"/>
<dbReference type="PeptideAtlas" id="P23642"/>
<dbReference type="EnsemblFungi" id="YML115C_mRNA">
    <property type="protein sequence ID" value="YML115C"/>
    <property type="gene ID" value="YML115C"/>
</dbReference>
<dbReference type="GeneID" id="854925"/>
<dbReference type="KEGG" id="sce:YML115C"/>
<dbReference type="AGR" id="SGD:S000004583"/>
<dbReference type="SGD" id="S000004583">
    <property type="gene designation" value="VAN1"/>
</dbReference>
<dbReference type="VEuPathDB" id="FungiDB:YML115C"/>
<dbReference type="eggNOG" id="ENOG502QRNF">
    <property type="taxonomic scope" value="Eukaryota"/>
</dbReference>
<dbReference type="GeneTree" id="ENSGT00940000176370"/>
<dbReference type="HOGENOM" id="CLU_017872_1_1_1"/>
<dbReference type="InParanoid" id="P23642"/>
<dbReference type="OMA" id="YAEYPTW"/>
<dbReference type="OrthoDB" id="204164at2759"/>
<dbReference type="BioCyc" id="MetaCyc:YML115C-MONOMER"/>
<dbReference type="BioCyc" id="YEAST:YML115C-MONOMER"/>
<dbReference type="BioGRID-ORCS" id="854925">
    <property type="hits" value="3 hits in 10 CRISPR screens"/>
</dbReference>
<dbReference type="PRO" id="PR:P23642"/>
<dbReference type="Proteomes" id="UP000002311">
    <property type="component" value="Chromosome XIII"/>
</dbReference>
<dbReference type="RNAct" id="P23642">
    <property type="molecule type" value="protein"/>
</dbReference>
<dbReference type="GO" id="GO:0005789">
    <property type="term" value="C:endoplasmic reticulum membrane"/>
    <property type="evidence" value="ECO:0007669"/>
    <property type="project" value="UniProtKB-SubCell"/>
</dbReference>
<dbReference type="GO" id="GO:0000136">
    <property type="term" value="C:mannan polymerase complex"/>
    <property type="evidence" value="ECO:0000314"/>
    <property type="project" value="UniProtKB"/>
</dbReference>
<dbReference type="GO" id="GO:0000009">
    <property type="term" value="F:alpha-1,6-mannosyltransferase activity"/>
    <property type="evidence" value="ECO:0000314"/>
    <property type="project" value="UniProtKB"/>
</dbReference>
<dbReference type="GO" id="GO:0000032">
    <property type="term" value="P:cell wall mannoprotein biosynthetic process"/>
    <property type="evidence" value="ECO:0000315"/>
    <property type="project" value="SGD"/>
</dbReference>
<dbReference type="GO" id="GO:0006487">
    <property type="term" value="P:protein N-linked glycosylation"/>
    <property type="evidence" value="ECO:0000314"/>
    <property type="project" value="SGD"/>
</dbReference>
<dbReference type="GO" id="GO:0030435">
    <property type="term" value="P:sporulation resulting in formation of a cellular spore"/>
    <property type="evidence" value="ECO:0007669"/>
    <property type="project" value="UniProtKB-KW"/>
</dbReference>
<dbReference type="FunFam" id="3.90.550.10:FF:000163">
    <property type="entry name" value="Van1p"/>
    <property type="match status" value="1"/>
</dbReference>
<dbReference type="Gene3D" id="3.90.550.10">
    <property type="entry name" value="Spore Coat Polysaccharide Biosynthesis Protein SpsA, Chain A"/>
    <property type="match status" value="2"/>
</dbReference>
<dbReference type="InterPro" id="IPR052086">
    <property type="entry name" value="Mannan_Polymerase_Subunit"/>
</dbReference>
<dbReference type="InterPro" id="IPR029044">
    <property type="entry name" value="Nucleotide-diphossugar_trans"/>
</dbReference>
<dbReference type="PANTHER" id="PTHR43083:SF5">
    <property type="entry name" value="MANNAN POLYMERASE I COMPLEX VAN1 SUBUNIT"/>
    <property type="match status" value="1"/>
</dbReference>
<dbReference type="PANTHER" id="PTHR43083">
    <property type="entry name" value="MANNAN POLYMERASE II"/>
    <property type="match status" value="1"/>
</dbReference>
<dbReference type="Pfam" id="PF03452">
    <property type="entry name" value="Anp1"/>
    <property type="match status" value="1"/>
</dbReference>
<dbReference type="SUPFAM" id="SSF53448">
    <property type="entry name" value="Nucleotide-diphospho-sugar transferases"/>
    <property type="match status" value="1"/>
</dbReference>
<reference key="1">
    <citation type="journal article" date="1990" name="Mol. Cell. Biol.">
        <title>Vanadate-resistant mutants of Saccharomyces cerevisiae show alterations in protein phosphorylation and growth control.</title>
        <authorList>
            <person name="Kanik-Ennulat C."/>
            <person name="Neff N."/>
        </authorList>
    </citation>
    <scope>NUCLEOTIDE SEQUENCE [GENOMIC DNA]</scope>
</reference>
<reference key="2">
    <citation type="submission" date="1994-06" db="EMBL/GenBank/DDBJ databases">
        <authorList>
            <person name="Kanik-Ennulat C."/>
            <person name="Neff N."/>
        </authorList>
    </citation>
    <scope>SEQUENCE REVISION</scope>
</reference>
<reference key="3">
    <citation type="journal article" date="1997" name="Nature">
        <title>The nucleotide sequence of Saccharomyces cerevisiae chromosome XIII.</title>
        <authorList>
            <person name="Bowman S."/>
            <person name="Churcher C.M."/>
            <person name="Badcock K."/>
            <person name="Brown D."/>
            <person name="Chillingworth T."/>
            <person name="Connor R."/>
            <person name="Dedman K."/>
            <person name="Devlin K."/>
            <person name="Gentles S."/>
            <person name="Hamlin N."/>
            <person name="Hunt S."/>
            <person name="Jagels K."/>
            <person name="Lye G."/>
            <person name="Moule S."/>
            <person name="Odell C."/>
            <person name="Pearson D."/>
            <person name="Rajandream M.A."/>
            <person name="Rice P."/>
            <person name="Skelton J."/>
            <person name="Walsh S.V."/>
            <person name="Whitehead S."/>
            <person name="Barrell B.G."/>
        </authorList>
    </citation>
    <scope>NUCLEOTIDE SEQUENCE [LARGE SCALE GENOMIC DNA]</scope>
    <source>
        <strain>ATCC 204508 / S288c</strain>
    </source>
</reference>
<reference key="4">
    <citation type="journal article" date="2014" name="G3 (Bethesda)">
        <title>The reference genome sequence of Saccharomyces cerevisiae: Then and now.</title>
        <authorList>
            <person name="Engel S.R."/>
            <person name="Dietrich F.S."/>
            <person name="Fisk D.G."/>
            <person name="Binkley G."/>
            <person name="Balakrishnan R."/>
            <person name="Costanzo M.C."/>
            <person name="Dwight S.S."/>
            <person name="Hitz B.C."/>
            <person name="Karra K."/>
            <person name="Nash R.S."/>
            <person name="Weng S."/>
            <person name="Wong E.D."/>
            <person name="Lloyd P."/>
            <person name="Skrzypek M.S."/>
            <person name="Miyasato S.R."/>
            <person name="Simison M."/>
            <person name="Cherry J.M."/>
        </authorList>
    </citation>
    <scope>GENOME REANNOTATION</scope>
    <source>
        <strain>ATCC 204508 / S288c</strain>
    </source>
</reference>
<reference key="5">
    <citation type="journal article" date="1997" name="Biochem. Biophys. Res. Commun.">
        <title>Novel membrane protein complexes for protein glycosylation in the yeast Golgi apparatus.</title>
        <authorList>
            <person name="Hashimoto H."/>
            <person name="Yoda K."/>
        </authorList>
    </citation>
    <scope>SUBCELLULAR LOCATION</scope>
    <scope>SUBUNIT</scope>
</reference>
<reference key="6">
    <citation type="journal article" date="1998" name="EMBO J.">
        <title>Multi-protein complexes in the cis Golgi of Saccharomyces cerevisiae with alpha-1,6-mannosyltransferase activity.</title>
        <authorList>
            <person name="Jungmann J."/>
            <person name="Munro S."/>
        </authorList>
    </citation>
    <scope>ACTIVITY OF M-POL I COMPLEX</scope>
    <scope>GLYCOSYLATION</scope>
    <scope>SUBUNIT</scope>
    <scope>SUBCELLULAR LOCATION</scope>
</reference>
<reference key="7">
    <citation type="journal article" date="2000" name="Proc. Natl. Acad. Sci. U.S.A.">
        <title>Active recycling of yeast Golgi mannosyltransferase complexes through the endoplasmic reticulum.</title>
        <authorList>
            <person name="Todorow Z."/>
            <person name="Spang A."/>
            <person name="Carmack E."/>
            <person name="Yates J."/>
            <person name="Schekman R."/>
        </authorList>
    </citation>
    <scope>SUBCELLULAR LOCATION</scope>
</reference>
<reference key="8">
    <citation type="journal article" date="2002" name="J. Biol. Chem.">
        <title>The components of the Saccharomyces cerevisiae mannosyltransferase complex M-Pol I have distinct functions in mannan synthesis.</title>
        <authorList>
            <person name="Stolz J."/>
            <person name="Munro S."/>
        </authorList>
    </citation>
    <scope>COMPOSITION OF THE M-POL I COMPLEX</scope>
    <scope>MUTAGENESIS OF ASP-361</scope>
</reference>
<reference key="9">
    <citation type="journal article" date="2003" name="Nature">
        <title>Global analysis of protein expression in yeast.</title>
        <authorList>
            <person name="Ghaemmaghami S."/>
            <person name="Huh W.-K."/>
            <person name="Bower K."/>
            <person name="Howson R.W."/>
            <person name="Belle A."/>
            <person name="Dephoure N."/>
            <person name="O'Shea E.K."/>
            <person name="Weissman J.S."/>
        </authorList>
    </citation>
    <scope>LEVEL OF PROTEIN EXPRESSION [LARGE SCALE ANALYSIS]</scope>
</reference>
<reference key="10">
    <citation type="journal article" date="2008" name="Mol. Cell. Proteomics">
        <title>A multidimensional chromatography technology for in-depth phosphoproteome analysis.</title>
        <authorList>
            <person name="Albuquerque C.P."/>
            <person name="Smolka M.B."/>
            <person name="Payne S.H."/>
            <person name="Bafna V."/>
            <person name="Eng J."/>
            <person name="Zhou H."/>
        </authorList>
    </citation>
    <scope>PHOSPHORYLATION [LARGE SCALE ANALYSIS] AT SER-25</scope>
    <scope>IDENTIFICATION BY MASS SPECTROMETRY [LARGE SCALE ANALYSIS]</scope>
</reference>
<reference key="11">
    <citation type="journal article" date="2009" name="Science">
        <title>Global analysis of Cdk1 substrate phosphorylation sites provides insights into evolution.</title>
        <authorList>
            <person name="Holt L.J."/>
            <person name="Tuch B.B."/>
            <person name="Villen J."/>
            <person name="Johnson A.D."/>
            <person name="Gygi S.P."/>
            <person name="Morgan D.O."/>
        </authorList>
    </citation>
    <scope>PHOSPHORYLATION [LARGE SCALE ANALYSIS] AT SER-25</scope>
    <scope>IDENTIFICATION BY MASS SPECTROMETRY [LARGE SCALE ANALYSIS]</scope>
</reference>
<proteinExistence type="evidence at protein level"/>
<gene>
    <name type="primary">VAN1</name>
    <name type="synonym">VRG7</name>
    <name type="ordered locus">YML115C</name>
    <name type="ORF">YM8339.04C</name>
</gene>
<evidence type="ECO:0000255" key="1"/>
<evidence type="ECO:0000256" key="2">
    <source>
        <dbReference type="SAM" id="MobiDB-lite"/>
    </source>
</evidence>
<evidence type="ECO:0000269" key="3">
    <source>
    </source>
</evidence>
<evidence type="ECO:0000269" key="4">
    <source>
    </source>
</evidence>
<evidence type="ECO:0000269" key="5">
    <source>
    </source>
</evidence>
<evidence type="ECO:0000269" key="6">
    <source>
    </source>
</evidence>
<evidence type="ECO:0000269" key="7">
    <source>
    </source>
</evidence>
<evidence type="ECO:0000305" key="8"/>
<evidence type="ECO:0000305" key="9">
    <source>
    </source>
</evidence>
<evidence type="ECO:0007744" key="10">
    <source>
    </source>
</evidence>
<evidence type="ECO:0007744" key="11">
    <source>
    </source>
</evidence>
<protein>
    <recommendedName>
        <fullName>Mannan polymerase I complex VAN1 subunit</fullName>
        <shortName>M-pol I subunit VAN1</shortName>
    </recommendedName>
    <alternativeName>
        <fullName>Vanadate resistance protein</fullName>
    </alternativeName>
</protein>
<feature type="chain" id="PRO_0000193672" description="Mannan polymerase I complex VAN1 subunit">
    <location>
        <begin position="1"/>
        <end position="535"/>
    </location>
</feature>
<feature type="topological domain" description="Cytoplasmic" evidence="1">
    <location>
        <begin position="1"/>
        <end position="64"/>
    </location>
</feature>
<feature type="transmembrane region" description="Helical; Signal-anchor for type II membrane protein">
    <location>
        <begin position="65"/>
        <end position="81"/>
    </location>
</feature>
<feature type="topological domain" description="Lumenal" evidence="1">
    <location>
        <begin position="82"/>
        <end position="535"/>
    </location>
</feature>
<feature type="region of interest" description="Disordered" evidence="2">
    <location>
        <begin position="22"/>
        <end position="48"/>
    </location>
</feature>
<feature type="modified residue" description="Phosphoserine" evidence="10 11">
    <location>
        <position position="25"/>
    </location>
</feature>
<feature type="glycosylation site" description="N-linked (GlcNAc...) asparagine" evidence="1">
    <location>
        <position position="215"/>
    </location>
</feature>
<feature type="glycosylation site" description="N-linked (GlcNAc...) asparagine" evidence="1">
    <location>
        <position position="251"/>
    </location>
</feature>
<feature type="mutagenesis site" description="Reduced activity of the M-Pol I complex." evidence="4">
    <original>D</original>
    <variation>A</variation>
    <location>
        <position position="361"/>
    </location>
</feature>
<feature type="sequence conflict" description="In Ref. 1; AAA35204." evidence="8" ref="1">
    <original>M</original>
    <variation>L</variation>
    <location>
        <position position="87"/>
    </location>
</feature>
<feature type="sequence conflict" description="In Ref. 1; AAA35204." evidence="8" ref="1">
    <original>Q</original>
    <variation>L</variation>
    <location>
        <position position="140"/>
    </location>
</feature>
<feature type="sequence conflict" description="In Ref. 1; AAA35204." evidence="8" ref="1">
    <original>D</original>
    <variation>E</variation>
    <location>
        <position position="281"/>
    </location>
</feature>
<comment type="function">
    <text>Involved in regulation of the phosphorylation of a number of proteins, some of which appear to be important in cell growth control.</text>
</comment>
<comment type="function">
    <text>The M-Pol I complex possesses alpha-1,6-mannosyltransferase activity and is probably involved in the elongation of the mannan backbone of N-linked glycans on cell wall and periplasmic proteins.</text>
</comment>
<comment type="subunit">
    <text evidence="6 7">Component of the M-Pol I complex which contains MNN9 and VAN1.</text>
</comment>
<comment type="interaction">
    <interactant intactId="EBI-20237">
        <id>P23642</id>
    </interactant>
    <interactant intactId="EBI-11082">
        <id>P39107</id>
        <label>MNN9</label>
    </interactant>
    <organismsDiffer>false</organismsDiffer>
    <experiments>5</experiments>
</comment>
<comment type="subcellular location">
    <subcellularLocation>
        <location evidence="3">Endoplasmic reticulum membrane</location>
        <topology evidence="9">Single-pass type II membrane protein</topology>
    </subcellularLocation>
    <subcellularLocation>
        <location evidence="7">Golgi apparatus membrane</location>
        <topology evidence="9">Single-pass type II membrane protein</topology>
    </subcellularLocation>
    <text evidence="3 6">Cis-Golgi (PubMed:9430634). Recycles between endoplasmic reticulum and Golgi (PubMed:11095735).</text>
</comment>
<comment type="PTM">
    <text evidence="6">Glycosylated.</text>
</comment>
<comment type="miscellaneous">
    <text evidence="5">Present with 4750 molecules/cell in log phase SD medium.</text>
</comment>
<comment type="similarity">
    <text evidence="8">Belongs to the ANP1/MMN9/VAN1 family.</text>
</comment>
<keyword id="KW-0256">Endoplasmic reticulum</keyword>
<keyword id="KW-0325">Glycoprotein</keyword>
<keyword id="KW-0333">Golgi apparatus</keyword>
<keyword id="KW-0341">Growth regulation</keyword>
<keyword id="KW-0472">Membrane</keyword>
<keyword id="KW-0597">Phosphoprotein</keyword>
<keyword id="KW-1185">Reference proteome</keyword>
<keyword id="KW-0735">Signal-anchor</keyword>
<keyword id="KW-0749">Sporulation</keyword>
<keyword id="KW-0812">Transmembrane</keyword>
<keyword id="KW-1133">Transmembrane helix</keyword>
<organism>
    <name type="scientific">Saccharomyces cerevisiae (strain ATCC 204508 / S288c)</name>
    <name type="common">Baker's yeast</name>
    <dbReference type="NCBI Taxonomy" id="559292"/>
    <lineage>
        <taxon>Eukaryota</taxon>
        <taxon>Fungi</taxon>
        <taxon>Dikarya</taxon>
        <taxon>Ascomycota</taxon>
        <taxon>Saccharomycotina</taxon>
        <taxon>Saccharomycetes</taxon>
        <taxon>Saccharomycetales</taxon>
        <taxon>Saccharomycetaceae</taxon>
        <taxon>Saccharomyces</taxon>
    </lineage>
</organism>
<accession>P23642</accession>
<accession>D6W0G9</accession>
<sequence length="535" mass="61092">MGMFFNLRSNIKKKAMDNGLSLPISRNGSSNNIKDKRSEHNSNSLKGKYRYQPRSTPSKFQLTVSITSLIIIAVLSLYLFISFLSGMGIGVSTQNGRSLLGSSKSSENYKTIDLEDEEYYDYDFEDIDPEVISKFDDGVQHYLISQFGSEVLTPKDDEKYQRELNMLFDSTVEEYDLSNFEGAPNGLETRDHILLCIPLRNAADVLPLMFKHLMNLTYPHELIDLAFLVSDCSEGDTTLDALIAYSRHLQNGTLSQIFQEIDAVIDSQTKGTDKLYLKYMDEGYINRVHQAFSPPFHENYDKPFRSVQIFQKDFGQVIGQGFSDRHAVKVQGIRRKLMGRARNWLTANALKPYHSWVYWRDADVELCPGSVIQDLMSKNYDVIVPNVWRPLPTFLGTEQPYDLNSWMESQEALALAKTLDEDDVIVEGYAEYPTWRVHLAYIRDAEGDPNEAVDLDGVGGVSILAKAKIFRNGVQFPAFTFENHAETEAFGKMAKKMGYRVGGLPHYTIWHIYEPSDDDLKEIASREREKRRQSE</sequence>
<name>VAN1_YEAST</name>